<dbReference type="EC" id="6.1.1.5"/>
<dbReference type="EMBL" id="L38957">
    <property type="protein sequence ID" value="AAA64890.1"/>
    <property type="molecule type" value="Genomic_DNA"/>
</dbReference>
<dbReference type="EMBL" id="U44030">
    <property type="protein sequence ID" value="AAB68180.1"/>
    <property type="molecule type" value="Genomic_DNA"/>
</dbReference>
<dbReference type="EMBL" id="BK006949">
    <property type="protein sequence ID" value="DAA11389.1"/>
    <property type="molecule type" value="Genomic_DNA"/>
</dbReference>
<dbReference type="PIR" id="S62035">
    <property type="entry name" value="S62035"/>
</dbReference>
<dbReference type="RefSeq" id="NP_015285.1">
    <property type="nucleotide sequence ID" value="NM_001183854.1"/>
</dbReference>
<dbReference type="SMR" id="P48526"/>
<dbReference type="BioGRID" id="36139">
    <property type="interactions" value="96"/>
</dbReference>
<dbReference type="DIP" id="DIP-4034N"/>
<dbReference type="FunCoup" id="P48526">
    <property type="interactions" value="898"/>
</dbReference>
<dbReference type="IntAct" id="P48526">
    <property type="interactions" value="3"/>
</dbReference>
<dbReference type="MINT" id="P48526"/>
<dbReference type="STRING" id="4932.YPL040C"/>
<dbReference type="GlyGen" id="P48526">
    <property type="glycosylation" value="1 site"/>
</dbReference>
<dbReference type="PaxDb" id="4932-YPL040C"/>
<dbReference type="PeptideAtlas" id="P48526"/>
<dbReference type="EnsemblFungi" id="YPL040C_mRNA">
    <property type="protein sequence ID" value="YPL040C"/>
    <property type="gene ID" value="YPL040C"/>
</dbReference>
<dbReference type="GeneID" id="856067"/>
<dbReference type="KEGG" id="sce:YPL040C"/>
<dbReference type="AGR" id="SGD:S000005961"/>
<dbReference type="SGD" id="S000005961">
    <property type="gene designation" value="ISM1"/>
</dbReference>
<dbReference type="VEuPathDB" id="FungiDB:YPL040C"/>
<dbReference type="eggNOG" id="KOG0433">
    <property type="taxonomic scope" value="Eukaryota"/>
</dbReference>
<dbReference type="GeneTree" id="ENSGT00550000074910"/>
<dbReference type="HOGENOM" id="CLU_001493_7_2_1"/>
<dbReference type="InParanoid" id="P48526"/>
<dbReference type="OMA" id="PVYWGTE"/>
<dbReference type="OrthoDB" id="10264412at2759"/>
<dbReference type="BioCyc" id="YEAST:G3O-33954-MONOMER"/>
<dbReference type="Reactome" id="R-SCE-9837999">
    <property type="pathway name" value="Mitochondrial protein degradation"/>
</dbReference>
<dbReference type="BioGRID-ORCS" id="856067">
    <property type="hits" value="0 hits in 10 CRISPR screens"/>
</dbReference>
<dbReference type="PRO" id="PR:P48526"/>
<dbReference type="Proteomes" id="UP000002311">
    <property type="component" value="Chromosome XVI"/>
</dbReference>
<dbReference type="RNAct" id="P48526">
    <property type="molecule type" value="protein"/>
</dbReference>
<dbReference type="GO" id="GO:0005759">
    <property type="term" value="C:mitochondrial matrix"/>
    <property type="evidence" value="ECO:0007669"/>
    <property type="project" value="UniProtKB-SubCell"/>
</dbReference>
<dbReference type="GO" id="GO:0005739">
    <property type="term" value="C:mitochondrion"/>
    <property type="evidence" value="ECO:0000315"/>
    <property type="project" value="SGD"/>
</dbReference>
<dbReference type="GO" id="GO:0002161">
    <property type="term" value="F:aminoacyl-tRNA deacylase activity"/>
    <property type="evidence" value="ECO:0007669"/>
    <property type="project" value="InterPro"/>
</dbReference>
<dbReference type="GO" id="GO:0005524">
    <property type="term" value="F:ATP binding"/>
    <property type="evidence" value="ECO:0007669"/>
    <property type="project" value="UniProtKB-KW"/>
</dbReference>
<dbReference type="GO" id="GO:0004822">
    <property type="term" value="F:isoleucine-tRNA ligase activity"/>
    <property type="evidence" value="ECO:0000247"/>
    <property type="project" value="SGD"/>
</dbReference>
<dbReference type="GO" id="GO:0000049">
    <property type="term" value="F:tRNA binding"/>
    <property type="evidence" value="ECO:0007669"/>
    <property type="project" value="InterPro"/>
</dbReference>
<dbReference type="GO" id="GO:0006428">
    <property type="term" value="P:isoleucyl-tRNA aminoacylation"/>
    <property type="evidence" value="ECO:0000247"/>
    <property type="project" value="SGD"/>
</dbReference>
<dbReference type="GO" id="GO:0032543">
    <property type="term" value="P:mitochondrial translation"/>
    <property type="evidence" value="ECO:0000315"/>
    <property type="project" value="SGD"/>
</dbReference>
<dbReference type="CDD" id="cd07960">
    <property type="entry name" value="Anticodon_Ia_Ile_BEm"/>
    <property type="match status" value="1"/>
</dbReference>
<dbReference type="CDD" id="cd00818">
    <property type="entry name" value="IleRS_core"/>
    <property type="match status" value="1"/>
</dbReference>
<dbReference type="FunFam" id="1.10.10.830:FF:000005">
    <property type="entry name" value="Mitochondrial isoleucyl-tRNA synthetase"/>
    <property type="match status" value="1"/>
</dbReference>
<dbReference type="FunFam" id="3.40.50.620:FF:000111">
    <property type="entry name" value="Mitochondrial isoleucyl-tRNA synthetase"/>
    <property type="match status" value="1"/>
</dbReference>
<dbReference type="FunFam" id="3.90.740.10:FF:000029">
    <property type="entry name" value="Mitochondrial isoleucyl-tRNA synthetase"/>
    <property type="match status" value="1"/>
</dbReference>
<dbReference type="Gene3D" id="1.10.730.20">
    <property type="match status" value="1"/>
</dbReference>
<dbReference type="Gene3D" id="3.40.50.620">
    <property type="entry name" value="HUPs"/>
    <property type="match status" value="2"/>
</dbReference>
<dbReference type="Gene3D" id="1.10.10.830">
    <property type="entry name" value="Ile-tRNA synthetase CP2 domain-like"/>
    <property type="match status" value="1"/>
</dbReference>
<dbReference type="Gene3D" id="3.90.740.10">
    <property type="entry name" value="Valyl/Leucyl/Isoleucyl-tRNA synthetase, editing domain"/>
    <property type="match status" value="1"/>
</dbReference>
<dbReference type="InterPro" id="IPR001412">
    <property type="entry name" value="aa-tRNA-synth_I_CS"/>
</dbReference>
<dbReference type="InterPro" id="IPR002300">
    <property type="entry name" value="aa-tRNA-synth_Ia"/>
</dbReference>
<dbReference type="InterPro" id="IPR033708">
    <property type="entry name" value="Anticodon_Ile_BEm"/>
</dbReference>
<dbReference type="InterPro" id="IPR002301">
    <property type="entry name" value="Ile-tRNA-ligase"/>
</dbReference>
<dbReference type="InterPro" id="IPR050081">
    <property type="entry name" value="Ile-tRNA_ligase"/>
</dbReference>
<dbReference type="InterPro" id="IPR013155">
    <property type="entry name" value="M/V/L/I-tRNA-synth_anticd-bd"/>
</dbReference>
<dbReference type="InterPro" id="IPR014729">
    <property type="entry name" value="Rossmann-like_a/b/a_fold"/>
</dbReference>
<dbReference type="InterPro" id="IPR009080">
    <property type="entry name" value="tRNAsynth_Ia_anticodon-bd"/>
</dbReference>
<dbReference type="InterPro" id="IPR009008">
    <property type="entry name" value="Val/Leu/Ile-tRNA-synth_edit"/>
</dbReference>
<dbReference type="NCBIfam" id="TIGR00392">
    <property type="entry name" value="ileS"/>
    <property type="match status" value="1"/>
</dbReference>
<dbReference type="PANTHER" id="PTHR42765:SF1">
    <property type="entry name" value="ISOLEUCINE--TRNA LIGASE, MITOCHONDRIAL"/>
    <property type="match status" value="1"/>
</dbReference>
<dbReference type="PANTHER" id="PTHR42765">
    <property type="entry name" value="SOLEUCYL-TRNA SYNTHETASE"/>
    <property type="match status" value="1"/>
</dbReference>
<dbReference type="Pfam" id="PF08264">
    <property type="entry name" value="Anticodon_1"/>
    <property type="match status" value="1"/>
</dbReference>
<dbReference type="Pfam" id="PF00133">
    <property type="entry name" value="tRNA-synt_1"/>
    <property type="match status" value="1"/>
</dbReference>
<dbReference type="PRINTS" id="PR00984">
    <property type="entry name" value="TRNASYNTHILE"/>
</dbReference>
<dbReference type="SUPFAM" id="SSF47323">
    <property type="entry name" value="Anticodon-binding domain of a subclass of class I aminoacyl-tRNA synthetases"/>
    <property type="match status" value="1"/>
</dbReference>
<dbReference type="SUPFAM" id="SSF52374">
    <property type="entry name" value="Nucleotidylyl transferase"/>
    <property type="match status" value="1"/>
</dbReference>
<dbReference type="SUPFAM" id="SSF50677">
    <property type="entry name" value="ValRS/IleRS/LeuRS editing domain"/>
    <property type="match status" value="1"/>
</dbReference>
<dbReference type="PROSITE" id="PS00178">
    <property type="entry name" value="AA_TRNA_LIGASE_I"/>
    <property type="match status" value="1"/>
</dbReference>
<accession>P48526</accession>
<accession>D6W3X3</accession>
<keyword id="KW-0030">Aminoacyl-tRNA synthetase</keyword>
<keyword id="KW-0067">ATP-binding</keyword>
<keyword id="KW-0436">Ligase</keyword>
<keyword id="KW-0496">Mitochondrion</keyword>
<keyword id="KW-0547">Nucleotide-binding</keyword>
<keyword id="KW-0648">Protein biosynthesis</keyword>
<keyword id="KW-1185">Reference proteome</keyword>
<organism>
    <name type="scientific">Saccharomyces cerevisiae (strain ATCC 204508 / S288c)</name>
    <name type="common">Baker's yeast</name>
    <dbReference type="NCBI Taxonomy" id="559292"/>
    <lineage>
        <taxon>Eukaryota</taxon>
        <taxon>Fungi</taxon>
        <taxon>Dikarya</taxon>
        <taxon>Ascomycota</taxon>
        <taxon>Saccharomycotina</taxon>
        <taxon>Saccharomycetes</taxon>
        <taxon>Saccharomycetales</taxon>
        <taxon>Saccharomycetaceae</taxon>
        <taxon>Saccharomyces</taxon>
    </lineage>
</organism>
<reference key="1">
    <citation type="submission" date="1995-01" db="EMBL/GenBank/DDBJ databases">
        <authorList>
            <person name="Tzagoloff A.A."/>
            <person name="Shtanko A."/>
        </authorList>
    </citation>
    <scope>NUCLEOTIDE SEQUENCE [GENOMIC DNA]</scope>
    <source>
        <strain>ATCC 24657 / D273-10B</strain>
    </source>
</reference>
<reference key="2">
    <citation type="journal article" date="1997" name="Nature">
        <title>The nucleotide sequence of Saccharomyces cerevisiae chromosome XVI.</title>
        <authorList>
            <person name="Bussey H."/>
            <person name="Storms R.K."/>
            <person name="Ahmed A."/>
            <person name="Albermann K."/>
            <person name="Allen E."/>
            <person name="Ansorge W."/>
            <person name="Araujo R."/>
            <person name="Aparicio A."/>
            <person name="Barrell B.G."/>
            <person name="Badcock K."/>
            <person name="Benes V."/>
            <person name="Botstein D."/>
            <person name="Bowman S."/>
            <person name="Brueckner M."/>
            <person name="Carpenter J."/>
            <person name="Cherry J.M."/>
            <person name="Chung E."/>
            <person name="Churcher C.M."/>
            <person name="Coster F."/>
            <person name="Davis K."/>
            <person name="Davis R.W."/>
            <person name="Dietrich F.S."/>
            <person name="Delius H."/>
            <person name="DiPaolo T."/>
            <person name="Dubois E."/>
            <person name="Duesterhoeft A."/>
            <person name="Duncan M."/>
            <person name="Floeth M."/>
            <person name="Fortin N."/>
            <person name="Friesen J.D."/>
            <person name="Fritz C."/>
            <person name="Goffeau A."/>
            <person name="Hall J."/>
            <person name="Hebling U."/>
            <person name="Heumann K."/>
            <person name="Hilbert H."/>
            <person name="Hillier L.W."/>
            <person name="Hunicke-Smith S."/>
            <person name="Hyman R.W."/>
            <person name="Johnston M."/>
            <person name="Kalman S."/>
            <person name="Kleine K."/>
            <person name="Komp C."/>
            <person name="Kurdi O."/>
            <person name="Lashkari D."/>
            <person name="Lew H."/>
            <person name="Lin A."/>
            <person name="Lin D."/>
            <person name="Louis E.J."/>
            <person name="Marathe R."/>
            <person name="Messenguy F."/>
            <person name="Mewes H.-W."/>
            <person name="Mirtipati S."/>
            <person name="Moestl D."/>
            <person name="Mueller-Auer S."/>
            <person name="Namath A."/>
            <person name="Nentwich U."/>
            <person name="Oefner P."/>
            <person name="Pearson D."/>
            <person name="Petel F.X."/>
            <person name="Pohl T.M."/>
            <person name="Purnelle B."/>
            <person name="Rajandream M.A."/>
            <person name="Rechmann S."/>
            <person name="Rieger M."/>
            <person name="Riles L."/>
            <person name="Roberts D."/>
            <person name="Schaefer M."/>
            <person name="Scharfe M."/>
            <person name="Scherens B."/>
            <person name="Schramm S."/>
            <person name="Schroeder M."/>
            <person name="Sdicu A.-M."/>
            <person name="Tettelin H."/>
            <person name="Urrestarazu L.A."/>
            <person name="Ushinsky S."/>
            <person name="Vierendeels F."/>
            <person name="Vissers S."/>
            <person name="Voss H."/>
            <person name="Walsh S.V."/>
            <person name="Wambutt R."/>
            <person name="Wang Y."/>
            <person name="Wedler E."/>
            <person name="Wedler H."/>
            <person name="Winnett E."/>
            <person name="Zhong W.-W."/>
            <person name="Zollner A."/>
            <person name="Vo D.H."/>
            <person name="Hani J."/>
        </authorList>
    </citation>
    <scope>NUCLEOTIDE SEQUENCE [LARGE SCALE GENOMIC DNA]</scope>
    <source>
        <strain>ATCC 204508 / S288c</strain>
    </source>
</reference>
<reference key="3">
    <citation type="journal article" date="2014" name="G3 (Bethesda)">
        <title>The reference genome sequence of Saccharomyces cerevisiae: Then and now.</title>
        <authorList>
            <person name="Engel S.R."/>
            <person name="Dietrich F.S."/>
            <person name="Fisk D.G."/>
            <person name="Binkley G."/>
            <person name="Balakrishnan R."/>
            <person name="Costanzo M.C."/>
            <person name="Dwight S.S."/>
            <person name="Hitz B.C."/>
            <person name="Karra K."/>
            <person name="Nash R.S."/>
            <person name="Weng S."/>
            <person name="Wong E.D."/>
            <person name="Lloyd P."/>
            <person name="Skrzypek M.S."/>
            <person name="Miyasato S.R."/>
            <person name="Simison M."/>
            <person name="Cherry J.M."/>
        </authorList>
    </citation>
    <scope>GENOME REANNOTATION</scope>
    <source>
        <strain>ATCC 204508 / S288c</strain>
    </source>
</reference>
<reference key="4">
    <citation type="journal article" date="2003" name="Nature">
        <title>Global analysis of protein expression in yeast.</title>
        <authorList>
            <person name="Ghaemmaghami S."/>
            <person name="Huh W.-K."/>
            <person name="Bower K."/>
            <person name="Howson R.W."/>
            <person name="Belle A."/>
            <person name="Dephoure N."/>
            <person name="O'Shea E.K."/>
            <person name="Weissman J.S."/>
        </authorList>
    </citation>
    <scope>LEVEL OF PROTEIN EXPRESSION [LARGE SCALE ANALYSIS]</scope>
</reference>
<comment type="catalytic activity">
    <reaction>
        <text>tRNA(Ile) + L-isoleucine + ATP = L-isoleucyl-tRNA(Ile) + AMP + diphosphate</text>
        <dbReference type="Rhea" id="RHEA:11060"/>
        <dbReference type="Rhea" id="RHEA-COMP:9666"/>
        <dbReference type="Rhea" id="RHEA-COMP:9695"/>
        <dbReference type="ChEBI" id="CHEBI:30616"/>
        <dbReference type="ChEBI" id="CHEBI:33019"/>
        <dbReference type="ChEBI" id="CHEBI:58045"/>
        <dbReference type="ChEBI" id="CHEBI:78442"/>
        <dbReference type="ChEBI" id="CHEBI:78528"/>
        <dbReference type="ChEBI" id="CHEBI:456215"/>
        <dbReference type="EC" id="6.1.1.5"/>
    </reaction>
</comment>
<comment type="subcellular location">
    <subcellularLocation>
        <location>Mitochondrion matrix</location>
    </subcellularLocation>
</comment>
<comment type="miscellaneous">
    <text evidence="2">Present with 1270 molecules/cell in log phase SD medium.</text>
</comment>
<comment type="similarity">
    <text evidence="3">Belongs to the class-I aminoacyl-tRNA synthetase family.</text>
</comment>
<proteinExistence type="evidence at protein level"/>
<name>SYIM_YEAST</name>
<sequence>MKRSRLVPQHIFSIISKRYLAKHAYQKTLNLPKTKFPNRSNLEITLRELIPKSSQLVYKEQLRDFFEEFSKLNTTDEKLEFIKEKLFILHDGPPYANGELHLGHALNKILKDIINRYQLSQGKYIFYKPGWDCHGLPIEIKALKDLSAQQIESISPLKIRSMALKHAQKAIKRQRETFQHFAILTDWETPYLTMDKDYEINQLNIFKEMYERGLIKRQNKPVYWGTETRTALAEGELEYNENHKSIAAYVKFPLEKKSQMDLCKKLGITNNLPIYCLIWTSTPWTLLSNRAICFNQDFSYSLLRLNSELILVETGSIDKLGLTTNSFETIKQFQGTHLNGLYYQNLLVDDKVGRPLLHGAHVTSGTGTGLVHTAPGHGQDDYLIGIQNGLEIYSPVDHQGRYQLNELPQSVRSIVRDEGDLTKGRQVLDAETAKIILCKLSDLNLLYKSHEYTHSYPYDWRSKKPVIIRATPQWFADLHDVKNLALESISRVKFCPKRGYSRLSSFMKSRNEWCISRQRSWGIPILSFYKKSEPDSVLMNSEILAHAIEKIKQKGINAWFNDKDNDMKEWLPEKYHDVAHEYCRSQDTMDVWFDSGSSWSVIKDFYEKSLKLSKLPSPLYQVCLEGSDQHRGWFQSSLLTKVASSNVPVAPYEEVITHGFTLDENGLKMSKSVGNTISPEAIIRGDENLGLPALGVDGLRYLIAQSNFTTDIVAGPTVMKHVGEALKKVRLTFRYLLSNLQKSQDFNLLPIEQLRRVDQYTLYKINELLETTREHYQKYNFSKVLITLQYHLNNELSAFYFDISKDILYSNQISSLARRQVQTTLVHILNAYRAILAPILPVMVQEVWKYIPEGWLQGQEHIDINPMRGKWPFLDSNTEIVTSFENFELKILKQFQEEFKRLSLEEGVTKTTHSHVTIFTKHHLPFSSDELCDILQSSAVDILQMDDNNNSLPTIELGSGINVQILVERSKRHNCPRCWKANSAEEDKLCDRCKEAVDHLMS</sequence>
<gene>
    <name type="primary">ISM1</name>
    <name type="ordered locus">YPL040C</name>
    <name type="ORF">P7102.10</name>
</gene>
<evidence type="ECO:0000250" key="1"/>
<evidence type="ECO:0000269" key="2">
    <source>
    </source>
</evidence>
<evidence type="ECO:0000305" key="3"/>
<feature type="chain" id="PRO_0000098605" description="Isoleucine--tRNA ligase, mitochondrial">
    <location>
        <begin position="1"/>
        <end position="1002"/>
    </location>
</feature>
<feature type="short sequence motif" description="'HIGH' region">
    <location>
        <begin position="94"/>
        <end position="104"/>
    </location>
</feature>
<feature type="short sequence motif" description="'KMSKS' region">
    <location>
        <begin position="668"/>
        <end position="672"/>
    </location>
</feature>
<feature type="binding site" evidence="1">
    <location>
        <position position="671"/>
    </location>
    <ligand>
        <name>ATP</name>
        <dbReference type="ChEBI" id="CHEBI:30616"/>
    </ligand>
</feature>
<feature type="sequence conflict" description="In Ref. 1; AAA64890." evidence="3" ref="1">
    <original>L</original>
    <variation>P</variation>
    <location>
        <position position="437"/>
    </location>
</feature>
<feature type="sequence conflict" description="In Ref. 1; AAA64890." evidence="3" ref="1">
    <original>S</original>
    <variation>L</variation>
    <location>
        <position position="672"/>
    </location>
</feature>
<feature type="sequence conflict" description="In Ref. 1; AAA64890." evidence="3" ref="1">
    <original>D</original>
    <variation>G</variation>
    <location>
        <position position="806"/>
    </location>
</feature>
<protein>
    <recommendedName>
        <fullName>Isoleucine--tRNA ligase, mitochondrial</fullName>
        <ecNumber>6.1.1.5</ecNumber>
    </recommendedName>
    <alternativeName>
        <fullName>Isoleucyl-tRNA synthetase</fullName>
        <shortName>IleRS</shortName>
    </alternativeName>
</protein>